<dbReference type="EMBL" id="M18289">
    <property type="protein sequence ID" value="AAA42450.1"/>
    <property type="molecule type" value="mRNA"/>
</dbReference>
<dbReference type="EMBL" id="M20300">
    <property type="protein sequence ID" value="AAA42439.1"/>
    <property type="molecule type" value="Genomic_DNA"/>
</dbReference>
<dbReference type="EMBL" id="M20300">
    <property type="protein sequence ID" value="AAA42440.1"/>
    <property type="molecule type" value="Genomic_DNA"/>
</dbReference>
<dbReference type="PIR" id="D27333">
    <property type="entry name" value="WMADF4"/>
</dbReference>
<dbReference type="GO" id="GO:0042025">
    <property type="term" value="C:host cell nucleus"/>
    <property type="evidence" value="ECO:0007669"/>
    <property type="project" value="UniProtKB-SubCell"/>
</dbReference>
<dbReference type="GO" id="GO:0008270">
    <property type="term" value="F:zinc ion binding"/>
    <property type="evidence" value="ECO:0007669"/>
    <property type="project" value="UniProtKB-KW"/>
</dbReference>
<dbReference type="GO" id="GO:0006355">
    <property type="term" value="P:regulation of DNA-templated transcription"/>
    <property type="evidence" value="ECO:0007669"/>
    <property type="project" value="InterPro"/>
</dbReference>
<dbReference type="GO" id="GO:0039645">
    <property type="term" value="P:symbiont-mediated perturbation of host cell cycle G1/S transition checkpoint"/>
    <property type="evidence" value="ECO:0007669"/>
    <property type="project" value="UniProtKB-KW"/>
</dbReference>
<dbReference type="GO" id="GO:0039648">
    <property type="term" value="P:symbiont-mediated perturbation of host ubiquitin-like protein modification"/>
    <property type="evidence" value="ECO:0007669"/>
    <property type="project" value="UniProtKB-KW"/>
</dbReference>
<dbReference type="GO" id="GO:0052170">
    <property type="term" value="P:symbiont-mediated suppression of host innate immune response"/>
    <property type="evidence" value="ECO:0007669"/>
    <property type="project" value="UniProtKB-KW"/>
</dbReference>
<dbReference type="GO" id="GO:0039563">
    <property type="term" value="P:symbiont-mediated suppression of host JAK-STAT cascade via inhibition of STAT1 activity"/>
    <property type="evidence" value="ECO:0007669"/>
    <property type="project" value="UniProtKB-KW"/>
</dbReference>
<dbReference type="GO" id="GO:0039502">
    <property type="term" value="P:symbiont-mediated suppression of host type I interferon-mediated signaling pathway"/>
    <property type="evidence" value="ECO:0007669"/>
    <property type="project" value="UniProtKB-KW"/>
</dbReference>
<dbReference type="InterPro" id="IPR014410">
    <property type="entry name" value="Aden_E1A"/>
</dbReference>
<dbReference type="Pfam" id="PF02703">
    <property type="entry name" value="Adeno_E1A"/>
    <property type="match status" value="1"/>
</dbReference>
<dbReference type="PIRSF" id="PIRSF003669">
    <property type="entry name" value="Aden_E1A"/>
    <property type="match status" value="1"/>
</dbReference>
<sequence length="251" mass="27476">MRMLPDFFTGNWDDMFQGLLEAEHPFDFPEPSQAFEEISLHNLFDVELDESEGDPNEEAVDGMFPNWMLSEDHSADSGAASGDSGVGEDLVEVNLDLKCYEEGLPPSGSEADEAEERAEEEETAVSNYVNIAEGASQLVLDCPENPGRGCRACDFHRGSSGNPEAMCALCYMRLTGHCIYSPISDAEGECELGSNEETELPCSLTATAPVRPTPCRVSCRRRPAVDCIEDLLEEDPTDEPLNLSLKRPKSS</sequence>
<name>E1A_ADE41</name>
<organism>
    <name type="scientific">Human adenovirus F serotype 41</name>
    <name type="common">HAdV-41</name>
    <name type="synonym">Human adenovirus 41</name>
    <dbReference type="NCBI Taxonomy" id="10524"/>
    <lineage>
        <taxon>Viruses</taxon>
        <taxon>Varidnaviria</taxon>
        <taxon>Bamfordvirae</taxon>
        <taxon>Preplasmiviricota</taxon>
        <taxon>Tectiliviricetes</taxon>
        <taxon>Rowavirales</taxon>
        <taxon>Adenoviridae</taxon>
        <taxon>Mastadenovirus</taxon>
        <taxon>Human mastadenovirus F</taxon>
    </lineage>
</organism>
<comment type="function">
    <text evidence="3">Plays a role in viral genome replication by driving entry of quiescent cells into the cell cycle. Stimulation of progression from G1 to S phase allows the virus to efficiently use the cellular DNA replicating machinery to achieve viral genome replication. E1A protein has both transforming and trans-activating activities. Induces the disassembly of the E2F1 transcription factor from RB1 by direct competition for the same binding site on RB1, with subsequent transcriptional activation of E2F1-regulated S-phase genes and of the E2 region of the adenoviral genome. Release of E2F1 leads to the ARF-mediated inhibition of MDM2 and causes TP53/p53 to accumulate because it is not targeted for degradation by MDM2-mediated ubiquitination anymore. This increase in TP53, in turn, would arrest the cell proliferation and direct its death but this effect is counteracted by the viral protein E1B-55K. Inactivation of the ability of RB1 to arrest the cell cycle is critical for cellular transformation, uncontrolled cellular growth and proliferation induced by viral infection. Interaction with RBX1 and CUL1 inhibits ubiquitination of the proteins targeted by SCF(FBXW7) ubiquitin ligase complex, and may be linked to unregulated host cell proliferation. The tumorigenesis-restraining activity of E1A may be related to the disruption of the host CtBP-CtIP complex through the CtBP binding motif. Interaction with host TMEM173/STING impairs the ability of TMEM173/STING to sense cytosolic DNA and promote the production of type I interferon (IFN-alpha and IFN-beta). Promotes the sumoylation of host ZBED1/hDREF with SUMO1 (By similarity).</text>
</comment>
<comment type="subunit">
    <text evidence="2 3">Interacts with host UBE2I; this interaction interferes with polySUMOylation. Interacts with host RB1; this interaction induces the aberrant dissociation of RB1-E2F1 complex thereby disrupting the activity of RB1 and activating E2F1-regulated genes. Interacts with host ATF7; the interaction enhances ATF7-mediated viral transactivation activity which requires the zinc binding domains of both proteins. Isoform early E1A 32 kDa protein and isoform early E1A 26 kDa protein interact (via N-terminus) with CUL1 and E3 ubiquitin ligase RBX1; these interactions inhibit RBX1-CUL1-dependent elongation reaction of ubiquitin chains and attenuate ubiquitination of SCF(FBXW7) target proteins. Interacts (via PXLXP motif) with host ZMYND11/BS69 (via MYND-type zinc finger); this interaction inhibits E1A mediated transactivation. Interacts with host EP300; this interaction stimulates the acetylation of RB1 by recruiting EP300 and RB1 into a multimeric-protein complex. Interacts with host CTBP1 and CTBP2; this interaction seems to potentiate viral replication. Interacts with host DCAF7. Interacts with host DYRK1A. Interacts with host KPNA4; this interaction allows E1A import into the host nucleus. Interacts with host EP400; this interaction stabilizes MYC. Interacts with host TBP protein; this interaction probably disrupts the TBP-TATA complex. Interacts (via LXCXE motif) with host TMEM173/STING; this interaction impairs the ability of TMEM173/STING to sense cytosolic DNA and promote the production of type I interferon (IFN-alpha and IFN-beta). Interacts (via C-terminus) with host ZBED1/hDREF (via C-terminus); the interaction is direct (By similarity).</text>
</comment>
<comment type="subcellular location">
    <subcellularLocation>
        <location evidence="3">Host nucleus</location>
    </subcellularLocation>
</comment>
<comment type="alternative products">
    <event type="alternative splicing"/>
    <isoform>
        <id>P10542-1</id>
        <name>1</name>
        <name>Early E1A 27 kDa protein</name>
        <sequence type="displayed"/>
    </isoform>
    <isoform>
        <id>P10542-2</id>
        <name>2</name>
        <name>Early E1A 25 kDa protein</name>
        <sequence type="described" ref="VSP_000206"/>
    </isoform>
    <text>Isoforms are derived from the E1 region of the genome.</text>
</comment>
<comment type="similarity">
    <text evidence="6">Belongs to the adenoviridae E1A protein family.</text>
</comment>
<proteinExistence type="evidence at transcript level"/>
<accession>P10542</accession>
<reference key="1">
    <citation type="journal article" date="1987" name="Gene">
        <title>Structure and organization of the left-terminal DNA regions of fastidious adenovirus types 40 and 41.</title>
        <authorList>
            <person name="van Loon A.E."/>
            <person name="Ligtenberg M."/>
            <person name="Reemst A.M.C.B."/>
            <person name="Sussenbach J.S."/>
            <person name="Rozijn T.H."/>
        </authorList>
    </citation>
    <scope>NUCLEOTIDE SEQUENCE [MRNA]</scope>
</reference>
<reference key="2">
    <citation type="journal article" date="1988" name="Virology">
        <title>Physical organization of the enteric adenovirus type 41 early region 1A.</title>
        <authorList>
            <person name="Allard A."/>
            <person name="Wadell G."/>
        </authorList>
    </citation>
    <scope>NUCLEOTIDE SEQUENCE [GENOMIC DNA]</scope>
</reference>
<keyword id="KW-0010">Activator</keyword>
<keyword id="KW-0025">Alternative splicing</keyword>
<keyword id="KW-0244">Early protein</keyword>
<keyword id="KW-1078">G1/S host cell cycle checkpoint dysregulation by virus</keyword>
<keyword id="KW-1048">Host nucleus</keyword>
<keyword id="KW-0945">Host-virus interaction</keyword>
<keyword id="KW-1090">Inhibition of host innate immune response by virus</keyword>
<keyword id="KW-1114">Inhibition of host interferon signaling pathway by virus</keyword>
<keyword id="KW-1105">Inhibition of host STAT1 by virus</keyword>
<keyword id="KW-0922">Interferon antiviral system evasion</keyword>
<keyword id="KW-0479">Metal-binding</keyword>
<keyword id="KW-1121">Modulation of host cell cycle by virus</keyword>
<keyword id="KW-1123">Modulation of host E3 ubiquitin ligases by virus</keyword>
<keyword id="KW-1130">Modulation of host ubiquitin pathway by virus</keyword>
<keyword id="KW-0553">Oncogene</keyword>
<keyword id="KW-0804">Transcription</keyword>
<keyword id="KW-0805">Transcription regulation</keyword>
<keyword id="KW-0899">Viral immunoevasion</keyword>
<keyword id="KW-0862">Zinc</keyword>
<keyword id="KW-0863">Zinc-finger</keyword>
<feature type="chain" id="PRO_0000221698" description="Early E1A protein">
    <location>
        <begin position="1"/>
        <end position="251"/>
    </location>
</feature>
<feature type="zinc finger region" evidence="2">
    <location>
        <begin position="150"/>
        <end position="170"/>
    </location>
</feature>
<feature type="region of interest" description="Interaction with RB1 in competition with E2F1" evidence="1">
    <location>
        <begin position="38"/>
        <end position="46"/>
    </location>
</feature>
<feature type="region of interest" description="Interaction with UBE2I" evidence="1">
    <location>
        <begin position="74"/>
        <end position="136"/>
    </location>
</feature>
<feature type="region of interest" description="Disordered" evidence="5">
    <location>
        <begin position="102"/>
        <end position="122"/>
    </location>
</feature>
<feature type="short sequence motif" description="LXCXE motif, interaction with host RB1 and TMEM173/STING" evidence="4">
    <location>
        <begin position="97"/>
        <end position="101"/>
    </location>
</feature>
<feature type="short sequence motif" description="PXDLS motif, CTBP-binding" evidence="1">
    <location>
        <begin position="240"/>
        <end position="244"/>
    </location>
</feature>
<feature type="short sequence motif" description="Nuclear localization signal" evidence="4">
    <location>
        <begin position="246"/>
        <end position="250"/>
    </location>
</feature>
<feature type="compositionally biased region" description="Acidic residues" evidence="5">
    <location>
        <begin position="110"/>
        <end position="122"/>
    </location>
</feature>
<feature type="splice variant" id="VSP_000206" description="In isoform 2." evidence="6">
    <location>
        <begin position="154"/>
        <end position="181"/>
    </location>
</feature>
<organismHost>
    <name type="scientific">Homo sapiens</name>
    <name type="common">Human</name>
    <dbReference type="NCBI Taxonomy" id="9606"/>
</organismHost>
<protein>
    <recommendedName>
        <fullName>Early E1A protein</fullName>
    </recommendedName>
    <alternativeName>
        <fullName>Early E1A 27 kDa protein</fullName>
    </alternativeName>
</protein>
<evidence type="ECO:0000250" key="1"/>
<evidence type="ECO:0000250" key="2">
    <source>
        <dbReference type="UniProtKB" id="P03254"/>
    </source>
</evidence>
<evidence type="ECO:0000250" key="3">
    <source>
        <dbReference type="UniProtKB" id="P03255"/>
    </source>
</evidence>
<evidence type="ECO:0000255" key="4"/>
<evidence type="ECO:0000256" key="5">
    <source>
        <dbReference type="SAM" id="MobiDB-lite"/>
    </source>
</evidence>
<evidence type="ECO:0000305" key="6"/>